<proteinExistence type="inferred from homology"/>
<organism>
    <name type="scientific">Janthinobacterium sp. (strain Marseille)</name>
    <name type="common">Minibacterium massiliensis</name>
    <dbReference type="NCBI Taxonomy" id="375286"/>
    <lineage>
        <taxon>Bacteria</taxon>
        <taxon>Pseudomonadati</taxon>
        <taxon>Pseudomonadota</taxon>
        <taxon>Betaproteobacteria</taxon>
        <taxon>Burkholderiales</taxon>
        <taxon>Oxalobacteraceae</taxon>
        <taxon>Janthinobacterium</taxon>
    </lineage>
</organism>
<accession>A6T2S0</accession>
<gene>
    <name evidence="1" type="primary">ispE</name>
    <name type="ordered locus">mma_3127</name>
</gene>
<dbReference type="EC" id="2.7.1.148" evidence="1"/>
<dbReference type="EMBL" id="CP000269">
    <property type="protein sequence ID" value="ABR88561.1"/>
    <property type="molecule type" value="Genomic_DNA"/>
</dbReference>
<dbReference type="RefSeq" id="WP_012080970.1">
    <property type="nucleotide sequence ID" value="NC_009659.1"/>
</dbReference>
<dbReference type="SMR" id="A6T2S0"/>
<dbReference type="STRING" id="375286.mma_3127"/>
<dbReference type="KEGG" id="mms:mma_3127"/>
<dbReference type="eggNOG" id="COG1947">
    <property type="taxonomic scope" value="Bacteria"/>
</dbReference>
<dbReference type="HOGENOM" id="CLU_053057_3_0_4"/>
<dbReference type="OrthoDB" id="9809438at2"/>
<dbReference type="UniPathway" id="UPA00056">
    <property type="reaction ID" value="UER00094"/>
</dbReference>
<dbReference type="Proteomes" id="UP000006388">
    <property type="component" value="Chromosome"/>
</dbReference>
<dbReference type="GO" id="GO:0050515">
    <property type="term" value="F:4-(cytidine 5'-diphospho)-2-C-methyl-D-erythritol kinase activity"/>
    <property type="evidence" value="ECO:0007669"/>
    <property type="project" value="UniProtKB-UniRule"/>
</dbReference>
<dbReference type="GO" id="GO:0005524">
    <property type="term" value="F:ATP binding"/>
    <property type="evidence" value="ECO:0007669"/>
    <property type="project" value="UniProtKB-UniRule"/>
</dbReference>
<dbReference type="GO" id="GO:0019288">
    <property type="term" value="P:isopentenyl diphosphate biosynthetic process, methylerythritol 4-phosphate pathway"/>
    <property type="evidence" value="ECO:0007669"/>
    <property type="project" value="UniProtKB-UniRule"/>
</dbReference>
<dbReference type="GO" id="GO:0016114">
    <property type="term" value="P:terpenoid biosynthetic process"/>
    <property type="evidence" value="ECO:0007669"/>
    <property type="project" value="InterPro"/>
</dbReference>
<dbReference type="Gene3D" id="3.30.230.10">
    <property type="match status" value="1"/>
</dbReference>
<dbReference type="Gene3D" id="3.30.70.890">
    <property type="entry name" value="GHMP kinase, C-terminal domain"/>
    <property type="match status" value="1"/>
</dbReference>
<dbReference type="HAMAP" id="MF_00061">
    <property type="entry name" value="IspE"/>
    <property type="match status" value="1"/>
</dbReference>
<dbReference type="InterPro" id="IPR013750">
    <property type="entry name" value="GHMP_kinase_C_dom"/>
</dbReference>
<dbReference type="InterPro" id="IPR036554">
    <property type="entry name" value="GHMP_kinase_C_sf"/>
</dbReference>
<dbReference type="InterPro" id="IPR006204">
    <property type="entry name" value="GHMP_kinase_N_dom"/>
</dbReference>
<dbReference type="InterPro" id="IPR004424">
    <property type="entry name" value="IspE"/>
</dbReference>
<dbReference type="InterPro" id="IPR020568">
    <property type="entry name" value="Ribosomal_Su5_D2-typ_SF"/>
</dbReference>
<dbReference type="InterPro" id="IPR014721">
    <property type="entry name" value="Ribsml_uS5_D2-typ_fold_subgr"/>
</dbReference>
<dbReference type="NCBIfam" id="TIGR00154">
    <property type="entry name" value="ispE"/>
    <property type="match status" value="1"/>
</dbReference>
<dbReference type="PANTHER" id="PTHR43527">
    <property type="entry name" value="4-DIPHOSPHOCYTIDYL-2-C-METHYL-D-ERYTHRITOL KINASE, CHLOROPLASTIC"/>
    <property type="match status" value="1"/>
</dbReference>
<dbReference type="PANTHER" id="PTHR43527:SF2">
    <property type="entry name" value="4-DIPHOSPHOCYTIDYL-2-C-METHYL-D-ERYTHRITOL KINASE, CHLOROPLASTIC"/>
    <property type="match status" value="1"/>
</dbReference>
<dbReference type="Pfam" id="PF08544">
    <property type="entry name" value="GHMP_kinases_C"/>
    <property type="match status" value="1"/>
</dbReference>
<dbReference type="Pfam" id="PF00288">
    <property type="entry name" value="GHMP_kinases_N"/>
    <property type="match status" value="1"/>
</dbReference>
<dbReference type="PIRSF" id="PIRSF010376">
    <property type="entry name" value="IspE"/>
    <property type="match status" value="1"/>
</dbReference>
<dbReference type="SUPFAM" id="SSF55060">
    <property type="entry name" value="GHMP Kinase, C-terminal domain"/>
    <property type="match status" value="1"/>
</dbReference>
<dbReference type="SUPFAM" id="SSF54211">
    <property type="entry name" value="Ribosomal protein S5 domain 2-like"/>
    <property type="match status" value="1"/>
</dbReference>
<sequence length="289" mass="31309">MTLTLNHCPAPAKLNLFLHVTGRRADGYHLLQSVFQLIDRGDVLHFATRDDNLIQRTTDLPGVPAESDLVVRAAKLLQTVATEKNPAKNFGADIAVEKKLPMGGGLGGGSSDAATTLLALNHLWQTGLSRAELMALGLQLGADVPFFIFGQNAFAEGIGEALVEVETPDRWFVVIEPGVSVPTPQIFSSTELTRDTKPVKISDFSGAQESFGKNDLQVVAEKLFPPIAEAIQWLGQYGDARMTGSGACVFCPFEQEQQADAVLTTVPPHWKAWKAKAIKHHPLAYLQQS</sequence>
<comment type="function">
    <text evidence="1">Catalyzes the phosphorylation of the position 2 hydroxy group of 4-diphosphocytidyl-2C-methyl-D-erythritol.</text>
</comment>
<comment type="catalytic activity">
    <reaction evidence="1">
        <text>4-CDP-2-C-methyl-D-erythritol + ATP = 4-CDP-2-C-methyl-D-erythritol 2-phosphate + ADP + H(+)</text>
        <dbReference type="Rhea" id="RHEA:18437"/>
        <dbReference type="ChEBI" id="CHEBI:15378"/>
        <dbReference type="ChEBI" id="CHEBI:30616"/>
        <dbReference type="ChEBI" id="CHEBI:57823"/>
        <dbReference type="ChEBI" id="CHEBI:57919"/>
        <dbReference type="ChEBI" id="CHEBI:456216"/>
        <dbReference type="EC" id="2.7.1.148"/>
    </reaction>
</comment>
<comment type="pathway">
    <text evidence="1">Isoprenoid biosynthesis; isopentenyl diphosphate biosynthesis via DXP pathway; isopentenyl diphosphate from 1-deoxy-D-xylulose 5-phosphate: step 3/6.</text>
</comment>
<comment type="similarity">
    <text evidence="1">Belongs to the GHMP kinase family. IspE subfamily.</text>
</comment>
<protein>
    <recommendedName>
        <fullName evidence="1">4-diphosphocytidyl-2-C-methyl-D-erythritol kinase</fullName>
        <shortName evidence="1">CMK</shortName>
        <ecNumber evidence="1">2.7.1.148</ecNumber>
    </recommendedName>
    <alternativeName>
        <fullName evidence="1">4-(cytidine-5'-diphospho)-2-C-methyl-D-erythritol kinase</fullName>
    </alternativeName>
</protein>
<keyword id="KW-0067">ATP-binding</keyword>
<keyword id="KW-0414">Isoprene biosynthesis</keyword>
<keyword id="KW-0418">Kinase</keyword>
<keyword id="KW-0547">Nucleotide-binding</keyword>
<keyword id="KW-0808">Transferase</keyword>
<reference key="1">
    <citation type="journal article" date="2007" name="PLoS Genet.">
        <title>Genome analysis of Minibacterium massiliensis highlights the convergent evolution of water-living bacteria.</title>
        <authorList>
            <person name="Audic S."/>
            <person name="Robert C."/>
            <person name="Campagna B."/>
            <person name="Parinello H."/>
            <person name="Claverie J.-M."/>
            <person name="Raoult D."/>
            <person name="Drancourt M."/>
        </authorList>
    </citation>
    <scope>NUCLEOTIDE SEQUENCE [LARGE SCALE GENOMIC DNA]</scope>
    <source>
        <strain>Marseille</strain>
    </source>
</reference>
<name>ISPE_JANMA</name>
<evidence type="ECO:0000255" key="1">
    <source>
        <dbReference type="HAMAP-Rule" id="MF_00061"/>
    </source>
</evidence>
<feature type="chain" id="PRO_0000335720" description="4-diphosphocytidyl-2-C-methyl-D-erythritol kinase">
    <location>
        <begin position="1"/>
        <end position="289"/>
    </location>
</feature>
<feature type="active site" evidence="1">
    <location>
        <position position="13"/>
    </location>
</feature>
<feature type="active site" evidence="1">
    <location>
        <position position="143"/>
    </location>
</feature>
<feature type="binding site" evidence="1">
    <location>
        <begin position="101"/>
        <end position="111"/>
    </location>
    <ligand>
        <name>ATP</name>
        <dbReference type="ChEBI" id="CHEBI:30616"/>
    </ligand>
</feature>